<comment type="function">
    <text evidence="1 4">Involved in the modulation of the mitochondrial apoptotic pathway by ensuring the accumulation of cardiolipin (CL) in mitochondrial membranes. The triap1:prelid1 complex probably functions as a phosphatidic acid (PA) transporter across the mitochondrion intermembrane space to provide PA for cardiolipin CL synthesis in the inner membrane. Likewise, the triap1:prelid3a complex mediates the transfer of phosphatidic acid (PA) between liposomes (in vitro) and probably functions as a PA transporter across the mitochondrion intermembrane space (in vivo). Mediates cell survival by inhibiting activation of caspase-9 which prevents induction of apoptosis (By similarity). Required for pronephros development; probably involved at an early stage in the formation of pronephric components derived from the somatic layer (PubMed:18472403).</text>
</comment>
<comment type="catalytic activity">
    <reaction evidence="1">
        <text>a 1,2-diacyl-sn-glycero-3-phosphate(in) = a 1,2-diacyl-sn-glycero-3-phosphate(out)</text>
        <dbReference type="Rhea" id="RHEA:36435"/>
        <dbReference type="ChEBI" id="CHEBI:58608"/>
    </reaction>
</comment>
<comment type="subunit">
    <text evidence="1">Monomer. Forms a complex with prelid1 in the mitochondrion intermembrane space. Interacts with prelid3a.</text>
</comment>
<comment type="subcellular location">
    <subcellularLocation>
        <location evidence="1">Mitochondrion</location>
    </subcellularLocation>
    <subcellularLocation>
        <location evidence="1">Mitochondrion intermembrane space</location>
    </subcellularLocation>
</comment>
<comment type="tissue specificity">
    <text evidence="4">Expressed in the developing pronephros.</text>
</comment>
<comment type="similarity">
    <text evidence="2">Belongs to the TRIAP1/MDM35 family.</text>
</comment>
<gene>
    <name evidence="7 8" type="primary">triap1</name>
</gene>
<keyword id="KW-0053">Apoptosis</keyword>
<keyword id="KW-0175">Coiled coil</keyword>
<keyword id="KW-0217">Developmental protein</keyword>
<keyword id="KW-1015">Disulfide bond</keyword>
<keyword id="KW-0445">Lipid transport</keyword>
<keyword id="KW-0496">Mitochondrion</keyword>
<keyword id="KW-1185">Reference proteome</keyword>
<keyword id="KW-0813">Transport</keyword>
<feature type="chain" id="PRO_0000397919" description="TP53-regulated inhibitor of apoptosis 1">
    <location>
        <begin position="1"/>
        <end position="78"/>
    </location>
</feature>
<feature type="domain" description="CHCH" evidence="3">
    <location>
        <begin position="5"/>
        <end position="55"/>
    </location>
</feature>
<feature type="coiled-coil region" evidence="1">
    <location>
        <begin position="1"/>
        <end position="52"/>
    </location>
</feature>
<feature type="short sequence motif" description="Cx9C motif 1" evidence="3">
    <location>
        <begin position="8"/>
        <end position="18"/>
    </location>
</feature>
<feature type="short sequence motif" description="Cx9C motif 2" evidence="3">
    <location>
        <begin position="37"/>
        <end position="47"/>
    </location>
</feature>
<feature type="site" description="Important for interaction with prelid3a" evidence="1">
    <location>
        <position position="27"/>
    </location>
</feature>
<feature type="site" description="Important for interaction with prelid3a" evidence="1">
    <location>
        <position position="41"/>
    </location>
</feature>
<feature type="disulfide bond" evidence="3">
    <location>
        <begin position="8"/>
        <end position="47"/>
    </location>
</feature>
<feature type="disulfide bond" evidence="3">
    <location>
        <begin position="18"/>
        <end position="37"/>
    </location>
</feature>
<protein>
    <recommendedName>
        <fullName evidence="7">TP53-regulated inhibitor of apoptosis 1</fullName>
    </recommendedName>
    <alternativeName>
        <fullName evidence="5">p53-inducible cell-survival factor</fullName>
        <shortName evidence="5">p53csv</shortName>
    </alternativeName>
</protein>
<dbReference type="EMBL" id="BC157192">
    <property type="protein sequence ID" value="AAI57193.1"/>
    <property type="molecule type" value="mRNA"/>
</dbReference>
<dbReference type="RefSeq" id="NP_001016268.1">
    <property type="nucleotide sequence ID" value="NM_001016268.2"/>
</dbReference>
<dbReference type="SMR" id="A9ULB4"/>
<dbReference type="FunCoup" id="A9ULB4">
    <property type="interactions" value="1299"/>
</dbReference>
<dbReference type="STRING" id="8364.ENSXETP00000014300"/>
<dbReference type="PaxDb" id="8364-ENSXETP00000026710"/>
<dbReference type="GeneID" id="549022"/>
<dbReference type="KEGG" id="xtr:549022"/>
<dbReference type="AGR" id="Xenbase:XB-GENE-949263"/>
<dbReference type="CTD" id="51499"/>
<dbReference type="Xenbase" id="XB-GENE-949263">
    <property type="gene designation" value="triap1"/>
</dbReference>
<dbReference type="eggNOG" id="KOG3481">
    <property type="taxonomic scope" value="Eukaryota"/>
</dbReference>
<dbReference type="HOGENOM" id="CLU_101473_4_0_1"/>
<dbReference type="InParanoid" id="A9ULB4"/>
<dbReference type="OMA" id="KKYDDCF"/>
<dbReference type="OrthoDB" id="19091at2759"/>
<dbReference type="PhylomeDB" id="A9ULB4"/>
<dbReference type="TreeFam" id="TF326640"/>
<dbReference type="Proteomes" id="UP000008143">
    <property type="component" value="Chromosome 1"/>
</dbReference>
<dbReference type="Bgee" id="ENSXETG00000012223">
    <property type="expression patterns" value="Expressed in heart and 20 other cell types or tissues"/>
</dbReference>
<dbReference type="GO" id="GO:0005758">
    <property type="term" value="C:mitochondrial intermembrane space"/>
    <property type="evidence" value="ECO:0007669"/>
    <property type="project" value="UniProtKB-SubCell"/>
</dbReference>
<dbReference type="GO" id="GO:0005739">
    <property type="term" value="C:mitochondrion"/>
    <property type="evidence" value="ECO:0000250"/>
    <property type="project" value="UniProtKB"/>
</dbReference>
<dbReference type="GO" id="GO:0006915">
    <property type="term" value="P:apoptotic process"/>
    <property type="evidence" value="ECO:0007669"/>
    <property type="project" value="UniProtKB-KW"/>
</dbReference>
<dbReference type="GO" id="GO:1902166">
    <property type="term" value="P:negative regulation of intrinsic apoptotic signaling pathway in response to DNA damage by p53 class mediator"/>
    <property type="evidence" value="ECO:0000250"/>
    <property type="project" value="UniProtKB"/>
</dbReference>
<dbReference type="GO" id="GO:0015914">
    <property type="term" value="P:phospholipid transport"/>
    <property type="evidence" value="ECO:0000250"/>
    <property type="project" value="UniProtKB"/>
</dbReference>
<dbReference type="GO" id="GO:0048793">
    <property type="term" value="P:pronephros development"/>
    <property type="evidence" value="ECO:0000315"/>
    <property type="project" value="UniProtKB"/>
</dbReference>
<dbReference type="InterPro" id="IPR007918">
    <property type="entry name" value="MDM35_apoptosis"/>
</dbReference>
<dbReference type="PANTHER" id="PTHR46403">
    <property type="entry name" value="TP53-REGULATED INHIBITOR OF APOPTOSIS 1"/>
    <property type="match status" value="1"/>
</dbReference>
<dbReference type="PANTHER" id="PTHR46403:SF1">
    <property type="entry name" value="TP53-REGULATED INHIBITOR OF APOPTOSIS 1"/>
    <property type="match status" value="1"/>
</dbReference>
<dbReference type="Pfam" id="PF05254">
    <property type="entry name" value="UPF0203"/>
    <property type="match status" value="1"/>
</dbReference>
<dbReference type="PROSITE" id="PS51808">
    <property type="entry name" value="CHCH"/>
    <property type="match status" value="1"/>
</dbReference>
<proteinExistence type="evidence at transcript level"/>
<organism>
    <name type="scientific">Xenopus tropicalis</name>
    <name type="common">Western clawed frog</name>
    <name type="synonym">Silurana tropicalis</name>
    <dbReference type="NCBI Taxonomy" id="8364"/>
    <lineage>
        <taxon>Eukaryota</taxon>
        <taxon>Metazoa</taxon>
        <taxon>Chordata</taxon>
        <taxon>Craniata</taxon>
        <taxon>Vertebrata</taxon>
        <taxon>Euteleostomi</taxon>
        <taxon>Amphibia</taxon>
        <taxon>Batrachia</taxon>
        <taxon>Anura</taxon>
        <taxon>Pipoidea</taxon>
        <taxon>Pipidae</taxon>
        <taxon>Xenopodinae</taxon>
        <taxon>Xenopus</taxon>
        <taxon>Silurana</taxon>
    </lineage>
</organism>
<accession>A9ULB4</accession>
<evidence type="ECO:0000250" key="1">
    <source>
        <dbReference type="UniProtKB" id="O43715"/>
    </source>
</evidence>
<evidence type="ECO:0000255" key="2"/>
<evidence type="ECO:0000255" key="3">
    <source>
        <dbReference type="PROSITE-ProRule" id="PRU01150"/>
    </source>
</evidence>
<evidence type="ECO:0000269" key="4">
    <source>
    </source>
</evidence>
<evidence type="ECO:0000303" key="5">
    <source>
    </source>
</evidence>
<evidence type="ECO:0000305" key="6"/>
<evidence type="ECO:0000312" key="7">
    <source>
        <dbReference type="EMBL" id="AAI57193.1"/>
    </source>
</evidence>
<evidence type="ECO:0000312" key="8">
    <source>
        <dbReference type="Xenbase" id="XB-GENE-949263"/>
    </source>
</evidence>
<sequence length="78" mass="8944">MNSVGEECTDMKREYDQCFNRWFAEKFLKGECSGDPCTELFRRYRDCVQKAIKDKDIPVDGVDFMGPSKSKTESDGSS</sequence>
<reference evidence="7" key="1">
    <citation type="submission" date="2007-12" db="EMBL/GenBank/DDBJ databases">
        <authorList>
            <consortium name="NIH - Xenopus Gene Collection (XGC) project"/>
        </authorList>
    </citation>
    <scope>NUCLEOTIDE SEQUENCE [LARGE SCALE MRNA]</scope>
    <source>
        <tissue evidence="7">Gastrula</tissue>
    </source>
</reference>
<reference evidence="6" key="2">
    <citation type="journal article" date="2008" name="Mech. Dev.">
        <title>A functional screen for genes involved in Xenopus pronephros development.</title>
        <authorList>
            <person name="Kyuno J."/>
            <person name="Masse K."/>
            <person name="Jones E.A."/>
        </authorList>
    </citation>
    <scope>FUNCTION</scope>
    <scope>TISSUE SPECIFICITY</scope>
</reference>
<name>TRIA1_XENTR</name>